<feature type="chain" id="PRO_0000362747" description="NADH-quinone oxidoreductase subunit A">
    <location>
        <begin position="1"/>
        <end position="137"/>
    </location>
</feature>
<feature type="transmembrane region" description="Helical" evidence="1">
    <location>
        <begin position="12"/>
        <end position="32"/>
    </location>
</feature>
<feature type="transmembrane region" description="Helical" evidence="1">
    <location>
        <begin position="66"/>
        <end position="86"/>
    </location>
</feature>
<feature type="transmembrane region" description="Helical" evidence="1">
    <location>
        <begin position="95"/>
        <end position="115"/>
    </location>
</feature>
<comment type="function">
    <text evidence="1">NDH-1 shuttles electrons from NADH, via FMN and iron-sulfur (Fe-S) centers, to quinones in the respiratory chain. The immediate electron acceptor for the enzyme in this species is believed to be ubiquinone. Couples the redox reaction to proton translocation (for every two electrons transferred, four hydrogen ions are translocated across the cytoplasmic membrane), and thus conserves the redox energy in a proton gradient.</text>
</comment>
<comment type="catalytic activity">
    <reaction evidence="1">
        <text>a quinone + NADH + 5 H(+)(in) = a quinol + NAD(+) + 4 H(+)(out)</text>
        <dbReference type="Rhea" id="RHEA:57888"/>
        <dbReference type="ChEBI" id="CHEBI:15378"/>
        <dbReference type="ChEBI" id="CHEBI:24646"/>
        <dbReference type="ChEBI" id="CHEBI:57540"/>
        <dbReference type="ChEBI" id="CHEBI:57945"/>
        <dbReference type="ChEBI" id="CHEBI:132124"/>
    </reaction>
</comment>
<comment type="subunit">
    <text evidence="1">NDH-1 is composed of 13 different subunits. Subunits NuoA, H, J, K, L, M, N constitute the membrane sector of the complex.</text>
</comment>
<comment type="subcellular location">
    <subcellularLocation>
        <location evidence="1">Cell inner membrane</location>
        <topology evidence="1">Multi-pass membrane protein</topology>
    </subcellularLocation>
</comment>
<comment type="similarity">
    <text evidence="1">Belongs to the complex I subunit 3 family.</text>
</comment>
<name>NUOA_PSESM</name>
<sequence length="137" mass="15143">MPESTGLIAHNWGFAIFLLGVVGLCAFMLGLSSLLGSKAWGRSKNEPFESGMLPTGSARLRLSAKFYLVAMLFVIFDIEALFLFAWSVSVRESGWTGFVEALVFIAILLAGLVYLWRVGALDWAPEGRRNRQAKLKQ</sequence>
<organism>
    <name type="scientific">Pseudomonas syringae pv. tomato (strain ATCC BAA-871 / DC3000)</name>
    <dbReference type="NCBI Taxonomy" id="223283"/>
    <lineage>
        <taxon>Bacteria</taxon>
        <taxon>Pseudomonadati</taxon>
        <taxon>Pseudomonadota</taxon>
        <taxon>Gammaproteobacteria</taxon>
        <taxon>Pseudomonadales</taxon>
        <taxon>Pseudomonadaceae</taxon>
        <taxon>Pseudomonas</taxon>
    </lineage>
</organism>
<protein>
    <recommendedName>
        <fullName evidence="1">NADH-quinone oxidoreductase subunit A</fullName>
        <ecNumber evidence="1">7.1.1.-</ecNumber>
    </recommendedName>
    <alternativeName>
        <fullName evidence="1">NADH dehydrogenase I subunit A</fullName>
    </alternativeName>
    <alternativeName>
        <fullName evidence="1">NDH-1 subunit A</fullName>
    </alternativeName>
    <alternativeName>
        <fullName evidence="1">NUO1</fullName>
    </alternativeName>
</protein>
<gene>
    <name evidence="1" type="primary">nuoA</name>
    <name type="ordered locus">PSPTO_3365</name>
</gene>
<dbReference type="EC" id="7.1.1.-" evidence="1"/>
<dbReference type="EMBL" id="AE016853">
    <property type="protein sequence ID" value="AAO56843.1"/>
    <property type="molecule type" value="Genomic_DNA"/>
</dbReference>
<dbReference type="RefSeq" id="NP_793148.1">
    <property type="nucleotide sequence ID" value="NC_004578.1"/>
</dbReference>
<dbReference type="RefSeq" id="WP_002554011.1">
    <property type="nucleotide sequence ID" value="NC_004578.1"/>
</dbReference>
<dbReference type="SMR" id="Q87ZQ9"/>
<dbReference type="STRING" id="223283.PSPTO_3365"/>
<dbReference type="DNASU" id="1185024"/>
<dbReference type="KEGG" id="pst:PSPTO_3365"/>
<dbReference type="PATRIC" id="fig|223283.9.peg.3445"/>
<dbReference type="eggNOG" id="COG0838">
    <property type="taxonomic scope" value="Bacteria"/>
</dbReference>
<dbReference type="HOGENOM" id="CLU_119549_2_1_6"/>
<dbReference type="OrthoDB" id="9791970at2"/>
<dbReference type="PhylomeDB" id="Q87ZQ9"/>
<dbReference type="Proteomes" id="UP000002515">
    <property type="component" value="Chromosome"/>
</dbReference>
<dbReference type="GO" id="GO:0030964">
    <property type="term" value="C:NADH dehydrogenase complex"/>
    <property type="evidence" value="ECO:0007669"/>
    <property type="project" value="TreeGrafter"/>
</dbReference>
<dbReference type="GO" id="GO:0005886">
    <property type="term" value="C:plasma membrane"/>
    <property type="evidence" value="ECO:0007669"/>
    <property type="project" value="UniProtKB-SubCell"/>
</dbReference>
<dbReference type="GO" id="GO:0008137">
    <property type="term" value="F:NADH dehydrogenase (ubiquinone) activity"/>
    <property type="evidence" value="ECO:0007669"/>
    <property type="project" value="InterPro"/>
</dbReference>
<dbReference type="GO" id="GO:0050136">
    <property type="term" value="F:NADH:ubiquinone reductase (non-electrogenic) activity"/>
    <property type="evidence" value="ECO:0007669"/>
    <property type="project" value="UniProtKB-UniRule"/>
</dbReference>
<dbReference type="GO" id="GO:0048038">
    <property type="term" value="F:quinone binding"/>
    <property type="evidence" value="ECO:0007669"/>
    <property type="project" value="UniProtKB-KW"/>
</dbReference>
<dbReference type="FunFam" id="1.20.58.1610:FF:000003">
    <property type="entry name" value="NADH-quinone oxidoreductase subunit A"/>
    <property type="match status" value="1"/>
</dbReference>
<dbReference type="Gene3D" id="1.20.58.1610">
    <property type="entry name" value="NADH:ubiquinone/plastoquinone oxidoreductase, chain 3"/>
    <property type="match status" value="1"/>
</dbReference>
<dbReference type="HAMAP" id="MF_01394">
    <property type="entry name" value="NDH1_NuoA"/>
    <property type="match status" value="1"/>
</dbReference>
<dbReference type="InterPro" id="IPR023043">
    <property type="entry name" value="NAD(P)H_OxRDtase_bac/plastid"/>
</dbReference>
<dbReference type="InterPro" id="IPR000440">
    <property type="entry name" value="NADH_UbQ/plastoQ_OxRdtase_su3"/>
</dbReference>
<dbReference type="InterPro" id="IPR038430">
    <property type="entry name" value="NDAH_ubi_oxred_su3_sf"/>
</dbReference>
<dbReference type="PANTHER" id="PTHR11058:SF21">
    <property type="entry name" value="NADH-QUINONE OXIDOREDUCTASE SUBUNIT A"/>
    <property type="match status" value="1"/>
</dbReference>
<dbReference type="PANTHER" id="PTHR11058">
    <property type="entry name" value="NADH-UBIQUINONE OXIDOREDUCTASE CHAIN 3"/>
    <property type="match status" value="1"/>
</dbReference>
<dbReference type="Pfam" id="PF00507">
    <property type="entry name" value="Oxidored_q4"/>
    <property type="match status" value="1"/>
</dbReference>
<proteinExistence type="inferred from homology"/>
<keyword id="KW-0997">Cell inner membrane</keyword>
<keyword id="KW-1003">Cell membrane</keyword>
<keyword id="KW-0472">Membrane</keyword>
<keyword id="KW-0520">NAD</keyword>
<keyword id="KW-0874">Quinone</keyword>
<keyword id="KW-1185">Reference proteome</keyword>
<keyword id="KW-1278">Translocase</keyword>
<keyword id="KW-0812">Transmembrane</keyword>
<keyword id="KW-1133">Transmembrane helix</keyword>
<keyword id="KW-0813">Transport</keyword>
<keyword id="KW-0830">Ubiquinone</keyword>
<accession>Q87ZQ9</accession>
<evidence type="ECO:0000255" key="1">
    <source>
        <dbReference type="HAMAP-Rule" id="MF_01394"/>
    </source>
</evidence>
<reference key="1">
    <citation type="journal article" date="2003" name="Proc. Natl. Acad. Sci. U.S.A.">
        <title>The complete genome sequence of the Arabidopsis and tomato pathogen Pseudomonas syringae pv. tomato DC3000.</title>
        <authorList>
            <person name="Buell C.R."/>
            <person name="Joardar V."/>
            <person name="Lindeberg M."/>
            <person name="Selengut J."/>
            <person name="Paulsen I.T."/>
            <person name="Gwinn M.L."/>
            <person name="Dodson R.J."/>
            <person name="DeBoy R.T."/>
            <person name="Durkin A.S."/>
            <person name="Kolonay J.F."/>
            <person name="Madupu R."/>
            <person name="Daugherty S.C."/>
            <person name="Brinkac L.M."/>
            <person name="Beanan M.J."/>
            <person name="Haft D.H."/>
            <person name="Nelson W.C."/>
            <person name="Davidsen T.M."/>
            <person name="Zafar N."/>
            <person name="Zhou L."/>
            <person name="Liu J."/>
            <person name="Yuan Q."/>
            <person name="Khouri H.M."/>
            <person name="Fedorova N.B."/>
            <person name="Tran B."/>
            <person name="Russell D."/>
            <person name="Berry K.J."/>
            <person name="Utterback T.R."/>
            <person name="Van Aken S.E."/>
            <person name="Feldblyum T.V."/>
            <person name="D'Ascenzo M."/>
            <person name="Deng W.-L."/>
            <person name="Ramos A.R."/>
            <person name="Alfano J.R."/>
            <person name="Cartinhour S."/>
            <person name="Chatterjee A.K."/>
            <person name="Delaney T.P."/>
            <person name="Lazarowitz S.G."/>
            <person name="Martin G.B."/>
            <person name="Schneider D.J."/>
            <person name="Tang X."/>
            <person name="Bender C.L."/>
            <person name="White O."/>
            <person name="Fraser C.M."/>
            <person name="Collmer A."/>
        </authorList>
    </citation>
    <scope>NUCLEOTIDE SEQUENCE [LARGE SCALE GENOMIC DNA]</scope>
    <source>
        <strain>ATCC BAA-871 / DC3000</strain>
    </source>
</reference>